<reference key="1">
    <citation type="submission" date="2007-11" db="EMBL/GenBank/DDBJ databases">
        <authorList>
            <consortium name="The Salmonella enterica serovar Arizonae Genome Sequencing Project"/>
            <person name="McClelland M."/>
            <person name="Sanderson E.K."/>
            <person name="Porwollik S."/>
            <person name="Spieth J."/>
            <person name="Clifton W.S."/>
            <person name="Fulton R."/>
            <person name="Chunyan W."/>
            <person name="Wollam A."/>
            <person name="Shah N."/>
            <person name="Pepin K."/>
            <person name="Bhonagiri V."/>
            <person name="Nash W."/>
            <person name="Johnson M."/>
            <person name="Thiruvilangam P."/>
            <person name="Wilson R."/>
        </authorList>
    </citation>
    <scope>NUCLEOTIDE SEQUENCE [LARGE SCALE GENOMIC DNA]</scope>
    <source>
        <strain>ATCC BAA-731 / CDC346-86 / RSK2980</strain>
    </source>
</reference>
<proteinExistence type="inferred from homology"/>
<comment type="function">
    <text evidence="1">Catalyzes the dehydration of D-mannonate.</text>
</comment>
<comment type="catalytic activity">
    <reaction evidence="1">
        <text>D-mannonate = 2-dehydro-3-deoxy-D-gluconate + H2O</text>
        <dbReference type="Rhea" id="RHEA:20097"/>
        <dbReference type="ChEBI" id="CHEBI:15377"/>
        <dbReference type="ChEBI" id="CHEBI:17767"/>
        <dbReference type="ChEBI" id="CHEBI:57990"/>
        <dbReference type="EC" id="4.2.1.8"/>
    </reaction>
</comment>
<comment type="cofactor">
    <cofactor evidence="1">
        <name>Fe(2+)</name>
        <dbReference type="ChEBI" id="CHEBI:29033"/>
    </cofactor>
    <cofactor evidence="1">
        <name>Mn(2+)</name>
        <dbReference type="ChEBI" id="CHEBI:29035"/>
    </cofactor>
</comment>
<comment type="pathway">
    <text evidence="1">Carbohydrate metabolism; pentose and glucuronate interconversion.</text>
</comment>
<comment type="similarity">
    <text evidence="1">Belongs to the mannonate dehydratase family.</text>
</comment>
<dbReference type="EC" id="4.2.1.8" evidence="1"/>
<dbReference type="EMBL" id="CP000880">
    <property type="protein sequence ID" value="ABX24265.1"/>
    <property type="molecule type" value="Genomic_DNA"/>
</dbReference>
<dbReference type="SMR" id="A9MQM1"/>
<dbReference type="STRING" id="41514.SARI_04491"/>
<dbReference type="KEGG" id="ses:SARI_04491"/>
<dbReference type="HOGENOM" id="CLU_058621_2_0_6"/>
<dbReference type="UniPathway" id="UPA00246"/>
<dbReference type="Proteomes" id="UP000002084">
    <property type="component" value="Chromosome"/>
</dbReference>
<dbReference type="GO" id="GO:0008198">
    <property type="term" value="F:ferrous iron binding"/>
    <property type="evidence" value="ECO:0007669"/>
    <property type="project" value="TreeGrafter"/>
</dbReference>
<dbReference type="GO" id="GO:0030145">
    <property type="term" value="F:manganese ion binding"/>
    <property type="evidence" value="ECO:0007669"/>
    <property type="project" value="TreeGrafter"/>
</dbReference>
<dbReference type="GO" id="GO:0008927">
    <property type="term" value="F:mannonate dehydratase activity"/>
    <property type="evidence" value="ECO:0007669"/>
    <property type="project" value="UniProtKB-UniRule"/>
</dbReference>
<dbReference type="GO" id="GO:0042840">
    <property type="term" value="P:D-glucuronate catabolic process"/>
    <property type="evidence" value="ECO:0007669"/>
    <property type="project" value="TreeGrafter"/>
</dbReference>
<dbReference type="FunFam" id="3.20.20.150:FF:000004">
    <property type="entry name" value="Mannonate dehydratase"/>
    <property type="match status" value="1"/>
</dbReference>
<dbReference type="FunFam" id="3.20.20.150:FF:000005">
    <property type="entry name" value="Mannonate dehydratase"/>
    <property type="match status" value="1"/>
</dbReference>
<dbReference type="Gene3D" id="3.20.20.150">
    <property type="entry name" value="Divalent-metal-dependent TIM barrel enzymes"/>
    <property type="match status" value="2"/>
</dbReference>
<dbReference type="HAMAP" id="MF_00106">
    <property type="entry name" value="UxuA"/>
    <property type="match status" value="1"/>
</dbReference>
<dbReference type="InterPro" id="IPR004628">
    <property type="entry name" value="Man_deHydtase"/>
</dbReference>
<dbReference type="InterPro" id="IPR036237">
    <property type="entry name" value="Xyl_isomerase-like_sf"/>
</dbReference>
<dbReference type="NCBIfam" id="NF003027">
    <property type="entry name" value="PRK03906.1"/>
    <property type="match status" value="1"/>
</dbReference>
<dbReference type="NCBIfam" id="TIGR00695">
    <property type="entry name" value="uxuA"/>
    <property type="match status" value="1"/>
</dbReference>
<dbReference type="PANTHER" id="PTHR30387">
    <property type="entry name" value="MANNONATE DEHYDRATASE"/>
    <property type="match status" value="1"/>
</dbReference>
<dbReference type="PANTHER" id="PTHR30387:SF2">
    <property type="entry name" value="MANNONATE DEHYDRATASE"/>
    <property type="match status" value="1"/>
</dbReference>
<dbReference type="Pfam" id="PF03786">
    <property type="entry name" value="UxuA"/>
    <property type="match status" value="1"/>
</dbReference>
<dbReference type="PIRSF" id="PIRSF016049">
    <property type="entry name" value="Man_dehyd"/>
    <property type="match status" value="1"/>
</dbReference>
<dbReference type="SUPFAM" id="SSF51658">
    <property type="entry name" value="Xylose isomerase-like"/>
    <property type="match status" value="1"/>
</dbReference>
<accession>A9MQM1</accession>
<gene>
    <name evidence="1" type="primary">uxuA</name>
    <name type="ordered locus">SARI_04491</name>
</gene>
<name>UXUA_SALAR</name>
<protein>
    <recommendedName>
        <fullName evidence="1">Mannonate dehydratase</fullName>
        <ecNumber evidence="1">4.2.1.8</ecNumber>
    </recommendedName>
    <alternativeName>
        <fullName evidence="1">D-mannonate hydro-lyase</fullName>
    </alternativeName>
</protein>
<sequence>MKQTWRWYGPNDPVTLSDVRQAGATGVVTALHHIPNGEIWSVDEIEKRKATVEEAGLEWSVVESVPIHEDIKTHTGQYDLWIKNYQQTLRNLAQCGIYTVCYNFMPVLDWTRTDLEYVLPDGSKALRFDQIEFAAFELHILKRPGAEADYTAEEIAQAGQRFATMSEEDKARLTRNIIAGLPGAEEGYTLDQFRQHLATYKDIDKAKLREHFAYFLKAIIPVADEVGVRMAVHPDDPPRPILGLPRIVSTIEDMQWMVETVNSMANGFTMCTGSYGVRADNDLVDMIKQFGPRIYFTHLRSTLREENPKTFHEAAHLHGDVDMYEVVKAIVEEEHRRKAEGSDDLIPMRPDHGHQMLDDLKKKTNPGYSAIGRLKGLAEVRGVELAIKRAFFSK</sequence>
<evidence type="ECO:0000255" key="1">
    <source>
        <dbReference type="HAMAP-Rule" id="MF_00106"/>
    </source>
</evidence>
<feature type="chain" id="PRO_1000075903" description="Mannonate dehydratase">
    <location>
        <begin position="1"/>
        <end position="394"/>
    </location>
</feature>
<organism>
    <name type="scientific">Salmonella arizonae (strain ATCC BAA-731 / CDC346-86 / RSK2980)</name>
    <dbReference type="NCBI Taxonomy" id="41514"/>
    <lineage>
        <taxon>Bacteria</taxon>
        <taxon>Pseudomonadati</taxon>
        <taxon>Pseudomonadota</taxon>
        <taxon>Gammaproteobacteria</taxon>
        <taxon>Enterobacterales</taxon>
        <taxon>Enterobacteriaceae</taxon>
        <taxon>Salmonella</taxon>
    </lineage>
</organism>
<keyword id="KW-0408">Iron</keyword>
<keyword id="KW-0456">Lyase</keyword>
<keyword id="KW-0464">Manganese</keyword>
<keyword id="KW-1185">Reference proteome</keyword>